<proteinExistence type="evidence at transcript level"/>
<sequence>MISAQAYGENGKMKEYHYTGPVEHKFSPYAFNGGTVLAVAGEDFAIVASDTRLSEGYSIHSRDSPKCYKLTDTTVLGCSGFHGDCLTLTKIIEARLKMYKHSNNKSMTSGAIAAMLSTILYGRRFFPYYVYNIIGGLDEEGRGAVYSFDPVGSYQRDTYKAGGSASAMLQPLLDNQIGFKNMENVEHVPLTQEKAVQLVKDVFISAAERDVYTGDALKVCIVSKEGIKEEIVPLRKD</sequence>
<accession>Q6DRF3</accession>
<accession>B2GRC6</accession>
<evidence type="ECO:0000250" key="1">
    <source>
        <dbReference type="UniProtKB" id="P20618"/>
    </source>
</evidence>
<evidence type="ECO:0000255" key="2">
    <source>
        <dbReference type="PROSITE-ProRule" id="PRU00809"/>
    </source>
</evidence>
<evidence type="ECO:0000269" key="3">
    <source>
    </source>
</evidence>
<evidence type="ECO:0000312" key="4">
    <source>
        <dbReference type="EMBL" id="AAT68124.1"/>
    </source>
</evidence>
<evidence type="ECO:0000312" key="5">
    <source>
        <dbReference type="ZFIN" id="ZDB-GENE-040618-2"/>
    </source>
</evidence>
<reference key="1">
    <citation type="journal article" date="2004" name="Proc. Natl. Acad. Sci. U.S.A.">
        <title>Identification of 315 genes essential for early zebrafish development.</title>
        <authorList>
            <person name="Amsterdam A."/>
            <person name="Nissen R.M."/>
            <person name="Sun Z."/>
            <person name="Swindell E.C."/>
            <person name="Farrington S."/>
            <person name="Hopkins N."/>
        </authorList>
    </citation>
    <scope>NUCLEOTIDE SEQUENCE [LARGE SCALE MRNA]</scope>
    <source>
        <tissue>Embryo</tissue>
    </source>
</reference>
<reference key="2">
    <citation type="journal article" date="2013" name="Nature">
        <title>The zebrafish reference genome sequence and its relationship to the human genome.</title>
        <authorList>
            <person name="Howe K."/>
            <person name="Clark M.D."/>
            <person name="Torroja C.F."/>
            <person name="Torrance J."/>
            <person name="Berthelot C."/>
            <person name="Muffato M."/>
            <person name="Collins J.E."/>
            <person name="Humphray S."/>
            <person name="McLaren K."/>
            <person name="Matthews L."/>
            <person name="McLaren S."/>
            <person name="Sealy I."/>
            <person name="Caccamo M."/>
            <person name="Churcher C."/>
            <person name="Scott C."/>
            <person name="Barrett J.C."/>
            <person name="Koch R."/>
            <person name="Rauch G.J."/>
            <person name="White S."/>
            <person name="Chow W."/>
            <person name="Kilian B."/>
            <person name="Quintais L.T."/>
            <person name="Guerra-Assuncao J.A."/>
            <person name="Zhou Y."/>
            <person name="Gu Y."/>
            <person name="Yen J."/>
            <person name="Vogel J.H."/>
            <person name="Eyre T."/>
            <person name="Redmond S."/>
            <person name="Banerjee R."/>
            <person name="Chi J."/>
            <person name="Fu B."/>
            <person name="Langley E."/>
            <person name="Maguire S.F."/>
            <person name="Laird G.K."/>
            <person name="Lloyd D."/>
            <person name="Kenyon E."/>
            <person name="Donaldson S."/>
            <person name="Sehra H."/>
            <person name="Almeida-King J."/>
            <person name="Loveland J."/>
            <person name="Trevanion S."/>
            <person name="Jones M."/>
            <person name="Quail M."/>
            <person name="Willey D."/>
            <person name="Hunt A."/>
            <person name="Burton J."/>
            <person name="Sims S."/>
            <person name="McLay K."/>
            <person name="Plumb B."/>
            <person name="Davis J."/>
            <person name="Clee C."/>
            <person name="Oliver K."/>
            <person name="Clark R."/>
            <person name="Riddle C."/>
            <person name="Elliot D."/>
            <person name="Threadgold G."/>
            <person name="Harden G."/>
            <person name="Ware D."/>
            <person name="Begum S."/>
            <person name="Mortimore B."/>
            <person name="Kerry G."/>
            <person name="Heath P."/>
            <person name="Phillimore B."/>
            <person name="Tracey A."/>
            <person name="Corby N."/>
            <person name="Dunn M."/>
            <person name="Johnson C."/>
            <person name="Wood J."/>
            <person name="Clark S."/>
            <person name="Pelan S."/>
            <person name="Griffiths G."/>
            <person name="Smith M."/>
            <person name="Glithero R."/>
            <person name="Howden P."/>
            <person name="Barker N."/>
            <person name="Lloyd C."/>
            <person name="Stevens C."/>
            <person name="Harley J."/>
            <person name="Holt K."/>
            <person name="Panagiotidis G."/>
            <person name="Lovell J."/>
            <person name="Beasley H."/>
            <person name="Henderson C."/>
            <person name="Gordon D."/>
            <person name="Auger K."/>
            <person name="Wright D."/>
            <person name="Collins J."/>
            <person name="Raisen C."/>
            <person name="Dyer L."/>
            <person name="Leung K."/>
            <person name="Robertson L."/>
            <person name="Ambridge K."/>
            <person name="Leongamornlert D."/>
            <person name="McGuire S."/>
            <person name="Gilderthorp R."/>
            <person name="Griffiths C."/>
            <person name="Manthravadi D."/>
            <person name="Nichol S."/>
            <person name="Barker G."/>
            <person name="Whitehead S."/>
            <person name="Kay M."/>
            <person name="Brown J."/>
            <person name="Murnane C."/>
            <person name="Gray E."/>
            <person name="Humphries M."/>
            <person name="Sycamore N."/>
            <person name="Barker D."/>
            <person name="Saunders D."/>
            <person name="Wallis J."/>
            <person name="Babbage A."/>
            <person name="Hammond S."/>
            <person name="Mashreghi-Mohammadi M."/>
            <person name="Barr L."/>
            <person name="Martin S."/>
            <person name="Wray P."/>
            <person name="Ellington A."/>
            <person name="Matthews N."/>
            <person name="Ellwood M."/>
            <person name="Woodmansey R."/>
            <person name="Clark G."/>
            <person name="Cooper J."/>
            <person name="Tromans A."/>
            <person name="Grafham D."/>
            <person name="Skuce C."/>
            <person name="Pandian R."/>
            <person name="Andrews R."/>
            <person name="Harrison E."/>
            <person name="Kimberley A."/>
            <person name="Garnett J."/>
            <person name="Fosker N."/>
            <person name="Hall R."/>
            <person name="Garner P."/>
            <person name="Kelly D."/>
            <person name="Bird C."/>
            <person name="Palmer S."/>
            <person name="Gehring I."/>
            <person name="Berger A."/>
            <person name="Dooley C.M."/>
            <person name="Ersan-Urun Z."/>
            <person name="Eser C."/>
            <person name="Geiger H."/>
            <person name="Geisler M."/>
            <person name="Karotki L."/>
            <person name="Kirn A."/>
            <person name="Konantz J."/>
            <person name="Konantz M."/>
            <person name="Oberlander M."/>
            <person name="Rudolph-Geiger S."/>
            <person name="Teucke M."/>
            <person name="Lanz C."/>
            <person name="Raddatz G."/>
            <person name="Osoegawa K."/>
            <person name="Zhu B."/>
            <person name="Rapp A."/>
            <person name="Widaa S."/>
            <person name="Langford C."/>
            <person name="Yang F."/>
            <person name="Schuster S.C."/>
            <person name="Carter N.P."/>
            <person name="Harrow J."/>
            <person name="Ning Z."/>
            <person name="Herrero J."/>
            <person name="Searle S.M."/>
            <person name="Enright A."/>
            <person name="Geisler R."/>
            <person name="Plasterk R.H."/>
            <person name="Lee C."/>
            <person name="Westerfield M."/>
            <person name="de Jong P.J."/>
            <person name="Zon L.I."/>
            <person name="Postlethwait J.H."/>
            <person name="Nusslein-Volhard C."/>
            <person name="Hubbard T.J."/>
            <person name="Roest Crollius H."/>
            <person name="Rogers J."/>
            <person name="Stemple D.L."/>
        </authorList>
    </citation>
    <scope>NUCLEOTIDE SEQUENCE [LARGE SCALE GENOMIC DNA]</scope>
    <source>
        <strain>Tuebingen</strain>
    </source>
</reference>
<reference key="3">
    <citation type="submission" date="2008-04" db="EMBL/GenBank/DDBJ databases">
        <authorList>
            <consortium name="NIH - Zebrafish Gene Collection (ZGC) project"/>
        </authorList>
    </citation>
    <scope>NUCLEOTIDE SEQUENCE [LARGE SCALE MRNA]</scope>
</reference>
<reference key="4">
    <citation type="journal article" date="2020" name="Hum. Mol. Genet.">
        <title>Biallelic variants in PSMB1 encoding the proteasome subunit beta6 cause impairment of proteasome function, microcephaly, intellectual disability, developmental delay and short stature.</title>
        <authorList>
            <person name="Ansar M."/>
            <person name="Ebstein F."/>
            <person name="Oezkoc H."/>
            <person name="Paracha S.A."/>
            <person name="Iwaszkiewicz J."/>
            <person name="Gesemann M."/>
            <person name="Zoete V."/>
            <person name="Ranza E."/>
            <person name="Santoni F.A."/>
            <person name="Sarwar M.T."/>
            <person name="Ahmed J."/>
            <person name="Krueger E."/>
            <person name="Bachmann-Gagescu R."/>
            <person name="Antonarakis S.E."/>
        </authorList>
    </citation>
    <scope>DISRUPTION PHENOTYPE</scope>
</reference>
<dbReference type="EMBL" id="AY648806">
    <property type="protein sequence ID" value="AAT68124.1"/>
    <property type="molecule type" value="mRNA"/>
</dbReference>
<dbReference type="EMBL" id="BX323887">
    <property type="status" value="NOT_ANNOTATED_CDS"/>
    <property type="molecule type" value="Genomic_DNA"/>
</dbReference>
<dbReference type="EMBL" id="BC085580">
    <property type="protein sequence ID" value="AAH85580.1"/>
    <property type="molecule type" value="mRNA"/>
</dbReference>
<dbReference type="EMBL" id="BC165077">
    <property type="protein sequence ID" value="AAI65077.1"/>
    <property type="molecule type" value="mRNA"/>
</dbReference>
<dbReference type="RefSeq" id="NP_001003889.1">
    <property type="nucleotide sequence ID" value="NM_001003889.1"/>
</dbReference>
<dbReference type="SMR" id="Q6DRF3"/>
<dbReference type="FunCoup" id="Q6DRF3">
    <property type="interactions" value="2911"/>
</dbReference>
<dbReference type="STRING" id="7955.ENSDARP00000011778"/>
<dbReference type="MEROPS" id="T01.990"/>
<dbReference type="PaxDb" id="7955-ENSDARP00000011778"/>
<dbReference type="Ensembl" id="ENSDART00000007231">
    <property type="protein sequence ID" value="ENSDARP00000011778"/>
    <property type="gene ID" value="ENSDARG00000009640"/>
</dbReference>
<dbReference type="GeneID" id="445413"/>
<dbReference type="KEGG" id="dre:445413"/>
<dbReference type="AGR" id="ZFIN:ZDB-GENE-040618-2"/>
<dbReference type="CTD" id="5689"/>
<dbReference type="ZFIN" id="ZDB-GENE-040618-2">
    <property type="gene designation" value="psmb1"/>
</dbReference>
<dbReference type="eggNOG" id="KOG0179">
    <property type="taxonomic scope" value="Eukaryota"/>
</dbReference>
<dbReference type="HOGENOM" id="CLU_035750_1_1_1"/>
<dbReference type="InParanoid" id="Q6DRF3"/>
<dbReference type="OMA" id="CSGCWCD"/>
<dbReference type="OrthoDB" id="268479at2759"/>
<dbReference type="TreeFam" id="TF106218"/>
<dbReference type="Reactome" id="R-DRE-1169091">
    <property type="pathway name" value="Activation of NF-kappaB in B cells"/>
</dbReference>
<dbReference type="Reactome" id="R-DRE-1236978">
    <property type="pathway name" value="Cross-presentation of soluble exogenous antigens (endosomes)"/>
</dbReference>
<dbReference type="Reactome" id="R-DRE-187577">
    <property type="pathway name" value="SCF(Skp2)-mediated degradation of p27/p21"/>
</dbReference>
<dbReference type="Reactome" id="R-DRE-349425">
    <property type="pathway name" value="Autodegradation of the E3 ubiquitin ligase COP1"/>
</dbReference>
<dbReference type="Reactome" id="R-DRE-350562">
    <property type="pathway name" value="Regulation of ornithine decarboxylase (ODC)"/>
</dbReference>
<dbReference type="Reactome" id="R-DRE-382556">
    <property type="pathway name" value="ABC-family proteins mediated transport"/>
</dbReference>
<dbReference type="Reactome" id="R-DRE-450408">
    <property type="pathway name" value="AUF1 (hnRNP D0) binds and destabilizes mRNA"/>
</dbReference>
<dbReference type="Reactome" id="R-DRE-4608870">
    <property type="pathway name" value="Asymmetric localization of PCP proteins"/>
</dbReference>
<dbReference type="Reactome" id="R-DRE-4641257">
    <property type="pathway name" value="Degradation of AXIN"/>
</dbReference>
<dbReference type="Reactome" id="R-DRE-4641258">
    <property type="pathway name" value="Degradation of DVL"/>
</dbReference>
<dbReference type="Reactome" id="R-DRE-5358346">
    <property type="pathway name" value="Hedgehog ligand biogenesis"/>
</dbReference>
<dbReference type="Reactome" id="R-DRE-5610780">
    <property type="pathway name" value="Degradation of GLI1 by the proteasome"/>
</dbReference>
<dbReference type="Reactome" id="R-DRE-5610785">
    <property type="pathway name" value="GLI3 is processed to GLI3R by the proteasome"/>
</dbReference>
<dbReference type="Reactome" id="R-DRE-5632684">
    <property type="pathway name" value="Hedgehog 'on' state"/>
</dbReference>
<dbReference type="Reactome" id="R-DRE-5687128">
    <property type="pathway name" value="MAPK6/MAPK4 signaling"/>
</dbReference>
<dbReference type="Reactome" id="R-DRE-5689603">
    <property type="pathway name" value="UCH proteinases"/>
</dbReference>
<dbReference type="Reactome" id="R-DRE-5689880">
    <property type="pathway name" value="Ub-specific processing proteases"/>
</dbReference>
<dbReference type="Reactome" id="R-DRE-6798695">
    <property type="pathway name" value="Neutrophil degranulation"/>
</dbReference>
<dbReference type="Reactome" id="R-DRE-68867">
    <property type="pathway name" value="Assembly of the pre-replicative complex"/>
</dbReference>
<dbReference type="Reactome" id="R-DRE-69017">
    <property type="pathway name" value="CDK-mediated phosphorylation and removal of Cdc6"/>
</dbReference>
<dbReference type="Reactome" id="R-DRE-69481">
    <property type="pathway name" value="G2/M Checkpoints"/>
</dbReference>
<dbReference type="Reactome" id="R-DRE-75815">
    <property type="pathway name" value="Ubiquitin-dependent degradation of Cyclin D"/>
</dbReference>
<dbReference type="Reactome" id="R-DRE-8852276">
    <property type="pathway name" value="The role of GTSE1 in G2/M progression after G2 checkpoint"/>
</dbReference>
<dbReference type="Reactome" id="R-DRE-8854050">
    <property type="pathway name" value="FBXL7 down-regulates AURKA during mitotic entry and in early mitosis"/>
</dbReference>
<dbReference type="Reactome" id="R-DRE-8939236">
    <property type="pathway name" value="RUNX1 regulates transcription of genes involved in differentiation of HSCs"/>
</dbReference>
<dbReference type="Reactome" id="R-DRE-8939902">
    <property type="pathway name" value="Regulation of RUNX2 expression and activity"/>
</dbReference>
<dbReference type="Reactome" id="R-DRE-8941858">
    <property type="pathway name" value="Regulation of RUNX3 expression and activity"/>
</dbReference>
<dbReference type="Reactome" id="R-DRE-8948751">
    <property type="pathway name" value="Regulation of PTEN stability and activity"/>
</dbReference>
<dbReference type="Reactome" id="R-DRE-8951664">
    <property type="pathway name" value="Neddylation"/>
</dbReference>
<dbReference type="Reactome" id="R-DRE-9755511">
    <property type="pathway name" value="KEAP1-NFE2L2 pathway"/>
</dbReference>
<dbReference type="Reactome" id="R-DRE-9762114">
    <property type="pathway name" value="GSK3B and BTRC:CUL1-mediated-degradation of NFE2L2"/>
</dbReference>
<dbReference type="Reactome" id="R-DRE-983168">
    <property type="pathway name" value="Antigen processing: Ubiquitination &amp; Proteasome degradation"/>
</dbReference>
<dbReference type="Reactome" id="R-DRE-9907900">
    <property type="pathway name" value="Proteasome assembly"/>
</dbReference>
<dbReference type="PRO" id="PR:Q6DRF3"/>
<dbReference type="Proteomes" id="UP000000437">
    <property type="component" value="Chromosome 13"/>
</dbReference>
<dbReference type="Bgee" id="ENSDARG00000009640">
    <property type="expression patterns" value="Expressed in presomitic mesoderm and 28 other cell types or tissues"/>
</dbReference>
<dbReference type="GO" id="GO:0005737">
    <property type="term" value="C:cytoplasm"/>
    <property type="evidence" value="ECO:0000318"/>
    <property type="project" value="GO_Central"/>
</dbReference>
<dbReference type="GO" id="GO:0005634">
    <property type="term" value="C:nucleus"/>
    <property type="evidence" value="ECO:0000318"/>
    <property type="project" value="GO_Central"/>
</dbReference>
<dbReference type="GO" id="GO:0005839">
    <property type="term" value="C:proteasome core complex"/>
    <property type="evidence" value="ECO:0000318"/>
    <property type="project" value="GO_Central"/>
</dbReference>
<dbReference type="GO" id="GO:0007420">
    <property type="term" value="P:brain development"/>
    <property type="evidence" value="ECO:0000315"/>
    <property type="project" value="ZFIN"/>
</dbReference>
<dbReference type="GO" id="GO:0051603">
    <property type="term" value="P:proteolysis involved in protein catabolic process"/>
    <property type="evidence" value="ECO:0000318"/>
    <property type="project" value="GO_Central"/>
</dbReference>
<dbReference type="CDD" id="cd03757">
    <property type="entry name" value="proteasome_beta_type_1"/>
    <property type="match status" value="1"/>
</dbReference>
<dbReference type="FunFam" id="3.60.20.10:FF:000033">
    <property type="entry name" value="Proteasome subunit beta"/>
    <property type="match status" value="1"/>
</dbReference>
<dbReference type="Gene3D" id="3.60.20.10">
    <property type="entry name" value="Glutamine Phosphoribosylpyrophosphate, subunit 1, domain 1"/>
    <property type="match status" value="1"/>
</dbReference>
<dbReference type="InterPro" id="IPR029055">
    <property type="entry name" value="Ntn_hydrolases_N"/>
</dbReference>
<dbReference type="InterPro" id="IPR016050">
    <property type="entry name" value="Proteasome_bsu_CS"/>
</dbReference>
<dbReference type="InterPro" id="IPR001353">
    <property type="entry name" value="Proteasome_sua/b"/>
</dbReference>
<dbReference type="InterPro" id="IPR023333">
    <property type="entry name" value="Proteasome_suB-type"/>
</dbReference>
<dbReference type="PANTHER" id="PTHR32194">
    <property type="entry name" value="METALLOPROTEASE TLDD"/>
    <property type="match status" value="1"/>
</dbReference>
<dbReference type="PANTHER" id="PTHR32194:SF2">
    <property type="entry name" value="PROTEASOME SUBUNIT BETA TYPE-1"/>
    <property type="match status" value="1"/>
</dbReference>
<dbReference type="Pfam" id="PF00227">
    <property type="entry name" value="Proteasome"/>
    <property type="match status" value="1"/>
</dbReference>
<dbReference type="SUPFAM" id="SSF56235">
    <property type="entry name" value="N-terminal nucleophile aminohydrolases (Ntn hydrolases)"/>
    <property type="match status" value="1"/>
</dbReference>
<dbReference type="PROSITE" id="PS00854">
    <property type="entry name" value="PROTEASOME_BETA_1"/>
    <property type="match status" value="1"/>
</dbReference>
<dbReference type="PROSITE" id="PS51476">
    <property type="entry name" value="PROTEASOME_BETA_2"/>
    <property type="match status" value="1"/>
</dbReference>
<organism>
    <name type="scientific">Danio rerio</name>
    <name type="common">Zebrafish</name>
    <name type="synonym">Brachydanio rerio</name>
    <dbReference type="NCBI Taxonomy" id="7955"/>
    <lineage>
        <taxon>Eukaryota</taxon>
        <taxon>Metazoa</taxon>
        <taxon>Chordata</taxon>
        <taxon>Craniata</taxon>
        <taxon>Vertebrata</taxon>
        <taxon>Euteleostomi</taxon>
        <taxon>Actinopterygii</taxon>
        <taxon>Neopterygii</taxon>
        <taxon>Teleostei</taxon>
        <taxon>Ostariophysi</taxon>
        <taxon>Cypriniformes</taxon>
        <taxon>Danionidae</taxon>
        <taxon>Danioninae</taxon>
        <taxon>Danio</taxon>
    </lineage>
</organism>
<name>PSB1_DANRE</name>
<gene>
    <name evidence="5" type="primary">psmb1</name>
    <name evidence="5" type="ORF">zgc:103665</name>
</gene>
<feature type="chain" id="PRO_0000457777" description="Proteasome subunit beta type-1">
    <location>
        <begin position="1"/>
        <end position="237"/>
    </location>
</feature>
<comment type="function">
    <text evidence="1">Non-catalytic component of the 20S core proteasome complex involved in the proteolytic degradation of most intracellular proteins. This complex plays numerous essential roles within the cell by associating with different regulatory particles. Associated with two 19S regulatory particles, forms the 26S proteasome and thus participates in the ATP-dependent degradation of ubiquitinated proteins. The 26S proteasome plays a key role in the maintenance of protein homeostasis by removing misfolded or damaged proteins that could impair cellular functions, and by removing proteins whose functions are no longer required. Associated with the PA200 or PA28, the 20S proteasome mediates ubiquitin-independent protein degradation.</text>
</comment>
<comment type="subunit">
    <text evidence="1">The 26S proteasome consists of a 20S proteasome core and two 19S regulatory subunits. The 20S proteasome core is a barrel-shaped complex made of 28 subunits that are arranged in four stacked rings. The two outer rings are each formed by seven alpha subunits, and the two inner rings are formed by seven beta subunits. The proteolytic activity is exerted by three beta-subunits psmb5, psmb6 and psmb7.</text>
</comment>
<comment type="subcellular location">
    <subcellularLocation>
        <location evidence="1">Cytoplasm</location>
    </subcellularLocation>
    <subcellularLocation>
        <location evidence="1">Nucleus</location>
    </subcellularLocation>
</comment>
<comment type="disruption phenotype">
    <text evidence="3">Morphant larvae have a strikingly smaller head compared with controls, a mild degree of edema surrounding the eyes, and a significant decrease in head/body length ratio. The eye size is significantly decreased in the morphants compared with controls.</text>
</comment>
<comment type="similarity">
    <text evidence="2">Belongs to the peptidase T1B family.</text>
</comment>
<keyword id="KW-0963">Cytoplasm</keyword>
<keyword id="KW-0539">Nucleus</keyword>
<keyword id="KW-0647">Proteasome</keyword>
<keyword id="KW-1185">Reference proteome</keyword>
<protein>
    <recommendedName>
        <fullName evidence="1">Proteasome subunit beta type-1</fullName>
    </recommendedName>
    <alternativeName>
        <fullName evidence="4">Proteasome beta-subunit C5</fullName>
    </alternativeName>
</protein>